<sequence>MRNTLRVIIFVLAVAAFLFLTNDYWEGKLLGGLSILISCSVVFIAFVISLENRKPAHTITWLVVLGSFPLIGFFFYLMFGRNYRKQRLFQKKAMLDEQTFLKFQGQREWAIEQMPIGEHQRPLLQLAHRIGKSPVSLATETRVLTNGEETFSTIFEELEKATHHIHLEYYIVRHDEVGQKLKTILIEKAKKGVHVRFLYDAVGSWKLSKTYIQELRDAGVEMIPFSPVRLPFLSNTINFRNHRKIIVIDGTIGFVGGLNIGDEYLGKDKYFGFWRDTHLWIRGEAVRTLQLIFLQDWYYMTGKTLLTPEYLSPELVHYDGQGGVQLIAGGPDQKWEVIKHLYFAMITSAQRSIWIASPYFVPDEDILTALKIAALSGLDVRILAPKRPDKKIVFYASRSYFPELLEAGVKIYEYSKGFLHSKIMIVDGELASIGTANMDMRSFHLNFEVNAFLYHTDSTKKLVADFLEDLKEASPIDYETFQQRPLSIRVVESVSRLLSPLL</sequence>
<proteinExistence type="inferred from homology"/>
<organism>
    <name type="scientific">Geobacillus sp. (strain WCH70)</name>
    <dbReference type="NCBI Taxonomy" id="471223"/>
    <lineage>
        <taxon>Bacteria</taxon>
        <taxon>Bacillati</taxon>
        <taxon>Bacillota</taxon>
        <taxon>Bacilli</taxon>
        <taxon>Bacillales</taxon>
        <taxon>Anoxybacillaceae</taxon>
        <taxon>Geobacillus</taxon>
    </lineage>
</organism>
<feature type="chain" id="PRO_1000203995" description="Cardiolipin synthase">
    <location>
        <begin position="1"/>
        <end position="502"/>
    </location>
</feature>
<feature type="transmembrane region" description="Helical" evidence="1">
    <location>
        <begin position="7"/>
        <end position="27"/>
    </location>
</feature>
<feature type="transmembrane region" description="Helical" evidence="1">
    <location>
        <begin position="29"/>
        <end position="49"/>
    </location>
</feature>
<feature type="transmembrane region" description="Helical" evidence="1">
    <location>
        <begin position="59"/>
        <end position="79"/>
    </location>
</feature>
<feature type="domain" description="PLD phosphodiesterase 1" evidence="1">
    <location>
        <begin position="237"/>
        <end position="264"/>
    </location>
</feature>
<feature type="domain" description="PLD phosphodiesterase 2" evidence="1">
    <location>
        <begin position="415"/>
        <end position="442"/>
    </location>
</feature>
<feature type="active site" evidence="1">
    <location>
        <position position="242"/>
    </location>
</feature>
<feature type="active site" evidence="1">
    <location>
        <position position="244"/>
    </location>
</feature>
<feature type="active site" evidence="1">
    <location>
        <position position="249"/>
    </location>
</feature>
<feature type="active site" evidence="1">
    <location>
        <position position="420"/>
    </location>
</feature>
<feature type="active site" evidence="1">
    <location>
        <position position="422"/>
    </location>
</feature>
<feature type="active site" evidence="1">
    <location>
        <position position="427"/>
    </location>
</feature>
<reference key="1">
    <citation type="submission" date="2009-06" db="EMBL/GenBank/DDBJ databases">
        <title>Complete sequence of chromosome of Geopacillus sp. WCH70.</title>
        <authorList>
            <consortium name="US DOE Joint Genome Institute"/>
            <person name="Lucas S."/>
            <person name="Copeland A."/>
            <person name="Lapidus A."/>
            <person name="Glavina del Rio T."/>
            <person name="Dalin E."/>
            <person name="Tice H."/>
            <person name="Bruce D."/>
            <person name="Goodwin L."/>
            <person name="Pitluck S."/>
            <person name="Chertkov O."/>
            <person name="Brettin T."/>
            <person name="Detter J.C."/>
            <person name="Han C."/>
            <person name="Larimer F."/>
            <person name="Land M."/>
            <person name="Hauser L."/>
            <person name="Kyrpides N."/>
            <person name="Mikhailova N."/>
            <person name="Brumm P."/>
            <person name="Mead D.A."/>
            <person name="Richardson P."/>
        </authorList>
    </citation>
    <scope>NUCLEOTIDE SEQUENCE [LARGE SCALE GENOMIC DNA]</scope>
    <source>
        <strain>WCH70</strain>
    </source>
</reference>
<evidence type="ECO:0000255" key="1">
    <source>
        <dbReference type="HAMAP-Rule" id="MF_01916"/>
    </source>
</evidence>
<dbReference type="EC" id="2.7.8.-" evidence="1"/>
<dbReference type="EMBL" id="CP001638">
    <property type="protein sequence ID" value="ACS23652.1"/>
    <property type="molecule type" value="Genomic_DNA"/>
</dbReference>
<dbReference type="SMR" id="C5D794"/>
<dbReference type="STRING" id="471223.GWCH70_0766"/>
<dbReference type="KEGG" id="gwc:GWCH70_0766"/>
<dbReference type="eggNOG" id="COG1502">
    <property type="taxonomic scope" value="Bacteria"/>
</dbReference>
<dbReference type="HOGENOM" id="CLU_038053_1_1_9"/>
<dbReference type="OrthoDB" id="9762009at2"/>
<dbReference type="GO" id="GO:0005886">
    <property type="term" value="C:plasma membrane"/>
    <property type="evidence" value="ECO:0007669"/>
    <property type="project" value="UniProtKB-SubCell"/>
</dbReference>
<dbReference type="GO" id="GO:0008808">
    <property type="term" value="F:cardiolipin synthase activity"/>
    <property type="evidence" value="ECO:0007669"/>
    <property type="project" value="InterPro"/>
</dbReference>
<dbReference type="GO" id="GO:0032049">
    <property type="term" value="P:cardiolipin biosynthetic process"/>
    <property type="evidence" value="ECO:0007669"/>
    <property type="project" value="InterPro"/>
</dbReference>
<dbReference type="CDD" id="cd09110">
    <property type="entry name" value="PLDc_CLS_1"/>
    <property type="match status" value="1"/>
</dbReference>
<dbReference type="CDD" id="cd09112">
    <property type="entry name" value="PLDc_CLS_2"/>
    <property type="match status" value="1"/>
</dbReference>
<dbReference type="FunFam" id="3.30.870.10:FF:000014">
    <property type="entry name" value="Cardiolipin synthase"/>
    <property type="match status" value="1"/>
</dbReference>
<dbReference type="FunFam" id="3.30.870.10:FF:000021">
    <property type="entry name" value="Cardiolipin synthase"/>
    <property type="match status" value="1"/>
</dbReference>
<dbReference type="Gene3D" id="3.30.870.10">
    <property type="entry name" value="Endonuclease Chain A"/>
    <property type="match status" value="2"/>
</dbReference>
<dbReference type="HAMAP" id="MF_01916">
    <property type="entry name" value="Cardiolipin_synth_Cls"/>
    <property type="match status" value="1"/>
</dbReference>
<dbReference type="InterPro" id="IPR030874">
    <property type="entry name" value="Cardiolipin_synth_Firmi"/>
</dbReference>
<dbReference type="InterPro" id="IPR022924">
    <property type="entry name" value="Cardiolipin_synthase"/>
</dbReference>
<dbReference type="InterPro" id="IPR027379">
    <property type="entry name" value="CLS_N"/>
</dbReference>
<dbReference type="InterPro" id="IPR025202">
    <property type="entry name" value="PLD-like_dom"/>
</dbReference>
<dbReference type="InterPro" id="IPR001736">
    <property type="entry name" value="PLipase_D/transphosphatidylase"/>
</dbReference>
<dbReference type="NCBIfam" id="TIGR04265">
    <property type="entry name" value="bac_cardiolipin"/>
    <property type="match status" value="1"/>
</dbReference>
<dbReference type="PANTHER" id="PTHR21248">
    <property type="entry name" value="CARDIOLIPIN SYNTHASE"/>
    <property type="match status" value="1"/>
</dbReference>
<dbReference type="PANTHER" id="PTHR21248:SF20">
    <property type="entry name" value="CARDIOLIPIN SYNTHASE YWIE-RELATED"/>
    <property type="match status" value="1"/>
</dbReference>
<dbReference type="Pfam" id="PF13091">
    <property type="entry name" value="PLDc_2"/>
    <property type="match status" value="2"/>
</dbReference>
<dbReference type="Pfam" id="PF13396">
    <property type="entry name" value="PLDc_N"/>
    <property type="match status" value="1"/>
</dbReference>
<dbReference type="SMART" id="SM00155">
    <property type="entry name" value="PLDc"/>
    <property type="match status" value="2"/>
</dbReference>
<dbReference type="SUPFAM" id="SSF56024">
    <property type="entry name" value="Phospholipase D/nuclease"/>
    <property type="match status" value="2"/>
</dbReference>
<dbReference type="PROSITE" id="PS50035">
    <property type="entry name" value="PLD"/>
    <property type="match status" value="2"/>
</dbReference>
<name>CLS_GEOSW</name>
<keyword id="KW-1003">Cell membrane</keyword>
<keyword id="KW-0444">Lipid biosynthesis</keyword>
<keyword id="KW-0443">Lipid metabolism</keyword>
<keyword id="KW-0472">Membrane</keyword>
<keyword id="KW-0594">Phospholipid biosynthesis</keyword>
<keyword id="KW-1208">Phospholipid metabolism</keyword>
<keyword id="KW-0677">Repeat</keyword>
<keyword id="KW-0808">Transferase</keyword>
<keyword id="KW-0812">Transmembrane</keyword>
<keyword id="KW-1133">Transmembrane helix</keyword>
<protein>
    <recommendedName>
        <fullName evidence="1">Cardiolipin synthase</fullName>
        <shortName evidence="1">CL synthase</shortName>
        <ecNumber evidence="1">2.7.8.-</ecNumber>
    </recommendedName>
</protein>
<gene>
    <name type="primary">cls</name>
    <name type="ordered locus">GWCH70_0766</name>
</gene>
<accession>C5D794</accession>
<comment type="function">
    <text evidence="1">Catalyzes the reversible phosphatidyl group transfer from one phosphatidylglycerol molecule to another to form cardiolipin (CL) (diphosphatidylglycerol) and glycerol.</text>
</comment>
<comment type="catalytic activity">
    <reaction evidence="1">
        <text>2 a 1,2-diacyl-sn-glycero-3-phospho-(1'-sn-glycerol) = a cardiolipin + glycerol</text>
        <dbReference type="Rhea" id="RHEA:31451"/>
        <dbReference type="ChEBI" id="CHEBI:17754"/>
        <dbReference type="ChEBI" id="CHEBI:62237"/>
        <dbReference type="ChEBI" id="CHEBI:64716"/>
    </reaction>
</comment>
<comment type="subcellular location">
    <subcellularLocation>
        <location evidence="1">Cell membrane</location>
        <topology evidence="1">Multi-pass membrane protein</topology>
    </subcellularLocation>
</comment>
<comment type="similarity">
    <text evidence="1">Belongs to the phospholipase D family. Cardiolipin synthase subfamily.</text>
</comment>